<proteinExistence type="predicted"/>
<protein>
    <recommendedName>
        <fullName>Uncharacterized protein VP8</fullName>
    </recommendedName>
</protein>
<keyword id="KW-1185">Reference proteome</keyword>
<dbReference type="EMBL" id="AF139764">
    <property type="protein sequence ID" value="AAG00073.1"/>
    <property type="molecule type" value="Genomic_RNA"/>
</dbReference>
<dbReference type="RefSeq" id="NP_690898.1">
    <property type="nucleotide sequence ID" value="NC_004188.1"/>
</dbReference>
<dbReference type="GeneID" id="993316"/>
<dbReference type="KEGG" id="vg:993316"/>
<dbReference type="Proteomes" id="UP000001675">
    <property type="component" value="Genome"/>
</dbReference>
<organismHost>
    <name type="scientific">Callospermophilus lateralis</name>
    <name type="common">Golden-mantled ground squirrel</name>
    <name type="synonym">Spermophilus lateralis</name>
    <dbReference type="NCBI Taxonomy" id="76772"/>
</organismHost>
<organismHost>
    <name type="scientific">Dermacentor andersoni</name>
    <name type="common">Rocky mountain wood tick</name>
    <dbReference type="NCBI Taxonomy" id="34620"/>
</organismHost>
<organismHost>
    <name type="scientific">Erethizon dorsatum</name>
    <name type="common">North American porcupine</name>
    <name type="synonym">Hystrix dorsata</name>
    <dbReference type="NCBI Taxonomy" id="34844"/>
</organismHost>
<organismHost>
    <name type="scientific">Homo sapiens</name>
    <name type="common">Human</name>
    <dbReference type="NCBI Taxonomy" id="9606"/>
</organismHost>
<organismHost>
    <name type="scientific">Neotoma cinerea</name>
    <name type="common">Bushy-tailed woodrat</name>
    <name type="synonym">Mus cinereus</name>
    <dbReference type="NCBI Taxonomy" id="105147"/>
</organismHost>
<organismHost>
    <name type="scientific">Peromyscus maniculatus</name>
    <name type="common">North American deer mouse</name>
    <dbReference type="NCBI Taxonomy" id="10042"/>
</organismHost>
<name>VP8_CTFVL</name>
<feature type="chain" id="PRO_0000403196" description="Uncharacterized protein VP8">
    <location>
        <begin position="1"/>
        <end position="660"/>
    </location>
</feature>
<feature type="region of interest" description="Disordered" evidence="1">
    <location>
        <begin position="220"/>
        <end position="239"/>
    </location>
</feature>
<feature type="compositionally biased region" description="Low complexity" evidence="1">
    <location>
        <begin position="222"/>
        <end position="239"/>
    </location>
</feature>
<sequence length="660" mass="73944">MRADRQSTAKLRPSLHAVIQTGNLNAFNFTVEGVDCPTPADLSRYCVANGWFFKIGNQVIIPVLRNFPAFNYNTDIGRFTSFPFETLEDVTKLHDLANGDLVPHFAFVEDGSPVVAAICDRHDNVVTLRFRDSGGRIITVEELLAGEQRDLNLYQGLDQLADEAGIRPEDIDQAALAAQAVADAGGGVAQQQAAAAAAGVQAQEDLPVGREDELRPEDVADARGQAAAPPQAQAPAPPDAALQRQREQAILRQVPNLHVLPQPRQQLIDRLAQVREAEQKFINEMIQEVGVIEQQRDVAAAGMRLELCRSVHRVDGILRAYQERVNPFRLGLNYRPPILLEEEIRVEENARRLGGEIGLHDFEIAERPERALLHAEYLGNLMHVEQEKLLTTGRTFVAHIHQAGYCNPEGWCCLQDVEVQVQGIEPESLLPALAVRTNCRGLVLRAPLPIIRVLTQIIHHPSGLDRLEATLNVLLTDMRERVSTLTTADSTRRIRVNDAHDLAAMTAPLGHVYAMLSRWRDNVARLRASAQHQLIAQELARKYAEWRPGQHYTIPGRVLNLFANRQLRYQSQLEWVYPHLWIADRNLAGAWILNGVVPTYRNLGEWVPDIAFIGLVQFLEFWEEFVTWFPHYGVGPINRGVPVFPTVFSPRMSSLAVRLL</sequence>
<organism>
    <name type="scientific">Colorado tick fever virus (strain USA/Florio N-7180)</name>
    <name type="common">CTFV</name>
    <dbReference type="NCBI Taxonomy" id="648168"/>
    <lineage>
        <taxon>Viruses</taxon>
        <taxon>Riboviria</taxon>
        <taxon>Orthornavirae</taxon>
        <taxon>Duplornaviricota</taxon>
        <taxon>Resentoviricetes</taxon>
        <taxon>Reovirales</taxon>
        <taxon>Spinareoviridae</taxon>
        <taxon>Coltivirus</taxon>
        <taxon>Colorado tick fever coltivirus</taxon>
    </lineage>
</organism>
<accession>Q9ENK8</accession>
<evidence type="ECO:0000256" key="1">
    <source>
        <dbReference type="SAM" id="MobiDB-lite"/>
    </source>
</evidence>
<reference key="1">
    <citation type="journal article" date="2000" name="Biochem. Biophys. Res. Commun.">
        <title>Sequence determination and analysis of the full-length genome of colorado tick fever virus, the type species of genus Coltivirus (Family Reoviridae).</title>
        <authorList>
            <person name="Attoui H."/>
            <person name="Billoir F."/>
            <person name="Biagini P."/>
            <person name="Cantaloube J.F."/>
            <person name="de Chesse R."/>
            <person name="de Micco P."/>
            <person name="de Lamballerie X."/>
        </authorList>
    </citation>
    <scope>NUCLEOTIDE SEQUENCE [GENOMIC RNA]</scope>
</reference>